<proteinExistence type="inferred from homology"/>
<protein>
    <recommendedName>
        <fullName evidence="1">Urease subunit alpha</fullName>
        <ecNumber evidence="1">3.5.1.5</ecNumber>
    </recommendedName>
    <alternativeName>
        <fullName evidence="1">Urea amidohydrolase subunit alpha</fullName>
    </alternativeName>
</protein>
<comment type="catalytic activity">
    <reaction evidence="1">
        <text>urea + 2 H2O + H(+) = hydrogencarbonate + 2 NH4(+)</text>
        <dbReference type="Rhea" id="RHEA:20557"/>
        <dbReference type="ChEBI" id="CHEBI:15377"/>
        <dbReference type="ChEBI" id="CHEBI:15378"/>
        <dbReference type="ChEBI" id="CHEBI:16199"/>
        <dbReference type="ChEBI" id="CHEBI:17544"/>
        <dbReference type="ChEBI" id="CHEBI:28938"/>
        <dbReference type="EC" id="3.5.1.5"/>
    </reaction>
</comment>
<comment type="cofactor">
    <cofactor evidence="1">
        <name>Ni cation</name>
        <dbReference type="ChEBI" id="CHEBI:25516"/>
    </cofactor>
    <text evidence="1">Binds 2 nickel ions per subunit.</text>
</comment>
<comment type="pathway">
    <text evidence="1">Nitrogen metabolism; urea degradation; CO(2) and NH(3) from urea (urease route): step 1/1.</text>
</comment>
<comment type="subunit">
    <text evidence="1">Heterotrimer of UreA (gamma), UreB (beta) and UreC (alpha) subunits. Three heterotrimers associate to form the active enzyme.</text>
</comment>
<comment type="subcellular location">
    <subcellularLocation>
        <location evidence="1">Cytoplasm</location>
    </subcellularLocation>
</comment>
<comment type="PTM">
    <text evidence="1">Carboxylation allows a single lysine to coordinate two nickel ions.</text>
</comment>
<comment type="similarity">
    <text evidence="1">Belongs to the metallo-dependent hydrolases superfamily. Urease alpha subunit family.</text>
</comment>
<name>URE1_HAEIN</name>
<organism>
    <name type="scientific">Haemophilus influenzae (strain ATCC 51907 / DSM 11121 / KW20 / Rd)</name>
    <dbReference type="NCBI Taxonomy" id="71421"/>
    <lineage>
        <taxon>Bacteria</taxon>
        <taxon>Pseudomonadati</taxon>
        <taxon>Pseudomonadota</taxon>
        <taxon>Gammaproteobacteria</taxon>
        <taxon>Pasteurellales</taxon>
        <taxon>Pasteurellaceae</taxon>
        <taxon>Haemophilus</taxon>
    </lineage>
</organism>
<accession>P44391</accession>
<gene>
    <name evidence="1" type="primary">ureC</name>
    <name type="ordered locus">HI_0539</name>
</gene>
<evidence type="ECO:0000255" key="1">
    <source>
        <dbReference type="HAMAP-Rule" id="MF_01953"/>
    </source>
</evidence>
<reference key="1">
    <citation type="journal article" date="1995" name="Science">
        <title>Whole-genome random sequencing and assembly of Haemophilus influenzae Rd.</title>
        <authorList>
            <person name="Fleischmann R.D."/>
            <person name="Adams M.D."/>
            <person name="White O."/>
            <person name="Clayton R.A."/>
            <person name="Kirkness E.F."/>
            <person name="Kerlavage A.R."/>
            <person name="Bult C.J."/>
            <person name="Tomb J.-F."/>
            <person name="Dougherty B.A."/>
            <person name="Merrick J.M."/>
            <person name="McKenney K."/>
            <person name="Sutton G.G."/>
            <person name="FitzHugh W."/>
            <person name="Fields C.A."/>
            <person name="Gocayne J.D."/>
            <person name="Scott J.D."/>
            <person name="Shirley R."/>
            <person name="Liu L.-I."/>
            <person name="Glodek A."/>
            <person name="Kelley J.M."/>
            <person name="Weidman J.F."/>
            <person name="Phillips C.A."/>
            <person name="Spriggs T."/>
            <person name="Hedblom E."/>
            <person name="Cotton M.D."/>
            <person name="Utterback T.R."/>
            <person name="Hanna M.C."/>
            <person name="Nguyen D.T."/>
            <person name="Saudek D.M."/>
            <person name="Brandon R.C."/>
            <person name="Fine L.D."/>
            <person name="Fritchman J.L."/>
            <person name="Fuhrmann J.L."/>
            <person name="Geoghagen N.S.M."/>
            <person name="Gnehm C.L."/>
            <person name="McDonald L.A."/>
            <person name="Small K.V."/>
            <person name="Fraser C.M."/>
            <person name="Smith H.O."/>
            <person name="Venter J.C."/>
        </authorList>
    </citation>
    <scope>NUCLEOTIDE SEQUENCE [LARGE SCALE GENOMIC DNA]</scope>
    <source>
        <strain>ATCC 51907 / DSM 11121 / KW20 / Rd</strain>
    </source>
</reference>
<sequence length="572" mass="61776">MALTISRAQYVATYGPTVGDKVRLGDTNLWATIEQDLLTKGDECKFGGGKSVRDGMAQSGTATRDNPNVLDFVITNVMIIDAKLGIIKADIGIRDGRIVGIGQAGNPDTMDNVTPNMIIGASTEVHNGAHLIATAGGIDTHIHFICPQQAQHAIESGVTTLIGGGTGPADGTHATTCTPGAWYMERMFQAAEALPVNVGFFGKGNCSTLDPLREQIEAGALGLKIHEDWGATPAVIDSALKVADEMDIQVAIHTDTLNESGFLEDTMKAIDGRVIHTFHTEGAGGGHAPDIIKAAMYSNVLPASTNPTRPFTKNTIDEHLDMLMVCHHLDKRVPEDVAFADSRIRPETIAAEDILHDMGVFSIMSSDSQAMGRIGEVVIRTWQTADKMKMQRGELGNEGNDNFRIKRYIAKYTINPAIAHGIAEHIGSLEVGKIADIVLWKPMFFGVKPEVVIKKGFISYAKMGDPNASIPTPQPVFYRPMYGAQGLATAQTAVFFVSQAAEKADIRAKFGLHKETIAVKGCRNVGKKDLVHNDVTPNITVDAERYEVRVDGELITCEPVDSVPLGQRYFLF</sequence>
<keyword id="KW-0963">Cytoplasm</keyword>
<keyword id="KW-0378">Hydrolase</keyword>
<keyword id="KW-0479">Metal-binding</keyword>
<keyword id="KW-0533">Nickel</keyword>
<keyword id="KW-1185">Reference proteome</keyword>
<feature type="chain" id="PRO_0000067542" description="Urease subunit alpha">
    <location>
        <begin position="1"/>
        <end position="572"/>
    </location>
</feature>
<feature type="domain" description="Urease" evidence="1">
    <location>
        <begin position="136"/>
        <end position="572"/>
    </location>
</feature>
<feature type="active site" description="Proton donor" evidence="1">
    <location>
        <position position="327"/>
    </location>
</feature>
<feature type="binding site" evidence="1">
    <location>
        <position position="141"/>
    </location>
    <ligand>
        <name>Ni(2+)</name>
        <dbReference type="ChEBI" id="CHEBI:49786"/>
        <label>1</label>
    </ligand>
</feature>
<feature type="binding site" evidence="1">
    <location>
        <position position="143"/>
    </location>
    <ligand>
        <name>Ni(2+)</name>
        <dbReference type="ChEBI" id="CHEBI:49786"/>
        <label>1</label>
    </ligand>
</feature>
<feature type="binding site" description="via carbamate group" evidence="1">
    <location>
        <position position="224"/>
    </location>
    <ligand>
        <name>Ni(2+)</name>
        <dbReference type="ChEBI" id="CHEBI:49786"/>
        <label>1</label>
    </ligand>
</feature>
<feature type="binding site" description="via carbamate group" evidence="1">
    <location>
        <position position="224"/>
    </location>
    <ligand>
        <name>Ni(2+)</name>
        <dbReference type="ChEBI" id="CHEBI:49786"/>
        <label>2</label>
    </ligand>
</feature>
<feature type="binding site" evidence="1">
    <location>
        <position position="226"/>
    </location>
    <ligand>
        <name>substrate</name>
    </ligand>
</feature>
<feature type="binding site" evidence="1">
    <location>
        <position position="253"/>
    </location>
    <ligand>
        <name>Ni(2+)</name>
        <dbReference type="ChEBI" id="CHEBI:49786"/>
        <label>2</label>
    </ligand>
</feature>
<feature type="binding site" evidence="1">
    <location>
        <position position="279"/>
    </location>
    <ligand>
        <name>Ni(2+)</name>
        <dbReference type="ChEBI" id="CHEBI:49786"/>
        <label>2</label>
    </ligand>
</feature>
<feature type="binding site" evidence="1">
    <location>
        <position position="367"/>
    </location>
    <ligand>
        <name>Ni(2+)</name>
        <dbReference type="ChEBI" id="CHEBI:49786"/>
        <label>1</label>
    </ligand>
</feature>
<feature type="modified residue" description="N6-carboxylysine" evidence="1">
    <location>
        <position position="224"/>
    </location>
</feature>
<dbReference type="EC" id="3.5.1.5" evidence="1"/>
<dbReference type="EMBL" id="L42023">
    <property type="protein sequence ID" value="AAC22197.1"/>
    <property type="molecule type" value="Genomic_DNA"/>
</dbReference>
<dbReference type="PIR" id="H64075">
    <property type="entry name" value="H64075"/>
</dbReference>
<dbReference type="RefSeq" id="NP_438697.1">
    <property type="nucleotide sequence ID" value="NC_000907.1"/>
</dbReference>
<dbReference type="SMR" id="P44391"/>
<dbReference type="STRING" id="71421.HI_0539"/>
<dbReference type="MEROPS" id="M38.982"/>
<dbReference type="EnsemblBacteria" id="AAC22197">
    <property type="protein sequence ID" value="AAC22197"/>
    <property type="gene ID" value="HI_0539"/>
</dbReference>
<dbReference type="KEGG" id="hin:HI_0539"/>
<dbReference type="PATRIC" id="fig|71421.8.peg.558"/>
<dbReference type="eggNOG" id="COG0804">
    <property type="taxonomic scope" value="Bacteria"/>
</dbReference>
<dbReference type="HOGENOM" id="CLU_000980_0_0_6"/>
<dbReference type="OrthoDB" id="9802793at2"/>
<dbReference type="PhylomeDB" id="P44391"/>
<dbReference type="BioCyc" id="HINF71421:G1GJ1-552-MONOMER"/>
<dbReference type="UniPathway" id="UPA00258">
    <property type="reaction ID" value="UER00370"/>
</dbReference>
<dbReference type="Proteomes" id="UP000000579">
    <property type="component" value="Chromosome"/>
</dbReference>
<dbReference type="GO" id="GO:0005737">
    <property type="term" value="C:cytoplasm"/>
    <property type="evidence" value="ECO:0007669"/>
    <property type="project" value="UniProtKB-SubCell"/>
</dbReference>
<dbReference type="GO" id="GO:0016151">
    <property type="term" value="F:nickel cation binding"/>
    <property type="evidence" value="ECO:0007669"/>
    <property type="project" value="UniProtKB-UniRule"/>
</dbReference>
<dbReference type="GO" id="GO:0009039">
    <property type="term" value="F:urease activity"/>
    <property type="evidence" value="ECO:0007669"/>
    <property type="project" value="UniProtKB-UniRule"/>
</dbReference>
<dbReference type="GO" id="GO:0043419">
    <property type="term" value="P:urea catabolic process"/>
    <property type="evidence" value="ECO:0007669"/>
    <property type="project" value="UniProtKB-UniRule"/>
</dbReference>
<dbReference type="CDD" id="cd00375">
    <property type="entry name" value="Urease_alpha"/>
    <property type="match status" value="1"/>
</dbReference>
<dbReference type="Gene3D" id="3.20.20.140">
    <property type="entry name" value="Metal-dependent hydrolases"/>
    <property type="match status" value="1"/>
</dbReference>
<dbReference type="Gene3D" id="2.30.40.10">
    <property type="entry name" value="Urease, subunit C, domain 1"/>
    <property type="match status" value="1"/>
</dbReference>
<dbReference type="HAMAP" id="MF_01953">
    <property type="entry name" value="Urease_alpha"/>
    <property type="match status" value="1"/>
</dbReference>
<dbReference type="InterPro" id="IPR006680">
    <property type="entry name" value="Amidohydro-rel"/>
</dbReference>
<dbReference type="InterPro" id="IPR011059">
    <property type="entry name" value="Metal-dep_hydrolase_composite"/>
</dbReference>
<dbReference type="InterPro" id="IPR032466">
    <property type="entry name" value="Metal_Hydrolase"/>
</dbReference>
<dbReference type="InterPro" id="IPR011612">
    <property type="entry name" value="Urease_alpha_N_dom"/>
</dbReference>
<dbReference type="InterPro" id="IPR050112">
    <property type="entry name" value="Urease_alpha_subunit"/>
</dbReference>
<dbReference type="InterPro" id="IPR017950">
    <property type="entry name" value="Urease_AS"/>
</dbReference>
<dbReference type="InterPro" id="IPR005848">
    <property type="entry name" value="Urease_asu"/>
</dbReference>
<dbReference type="InterPro" id="IPR017951">
    <property type="entry name" value="Urease_asu_c"/>
</dbReference>
<dbReference type="InterPro" id="IPR029754">
    <property type="entry name" value="Urease_Ni-bd"/>
</dbReference>
<dbReference type="NCBIfam" id="NF009686">
    <property type="entry name" value="PRK13207.1"/>
    <property type="match status" value="1"/>
</dbReference>
<dbReference type="NCBIfam" id="TIGR01792">
    <property type="entry name" value="urease_alph"/>
    <property type="match status" value="1"/>
</dbReference>
<dbReference type="PANTHER" id="PTHR43440">
    <property type="entry name" value="UREASE"/>
    <property type="match status" value="1"/>
</dbReference>
<dbReference type="PANTHER" id="PTHR43440:SF1">
    <property type="entry name" value="UREASE"/>
    <property type="match status" value="1"/>
</dbReference>
<dbReference type="Pfam" id="PF01979">
    <property type="entry name" value="Amidohydro_1"/>
    <property type="match status" value="1"/>
</dbReference>
<dbReference type="Pfam" id="PF00449">
    <property type="entry name" value="Urease_alpha"/>
    <property type="match status" value="1"/>
</dbReference>
<dbReference type="PRINTS" id="PR01752">
    <property type="entry name" value="UREASE"/>
</dbReference>
<dbReference type="SUPFAM" id="SSF51338">
    <property type="entry name" value="Composite domain of metallo-dependent hydrolases"/>
    <property type="match status" value="2"/>
</dbReference>
<dbReference type="SUPFAM" id="SSF51556">
    <property type="entry name" value="Metallo-dependent hydrolases"/>
    <property type="match status" value="1"/>
</dbReference>
<dbReference type="PROSITE" id="PS01120">
    <property type="entry name" value="UREASE_1"/>
    <property type="match status" value="1"/>
</dbReference>
<dbReference type="PROSITE" id="PS00145">
    <property type="entry name" value="UREASE_2"/>
    <property type="match status" value="1"/>
</dbReference>
<dbReference type="PROSITE" id="PS51368">
    <property type="entry name" value="UREASE_3"/>
    <property type="match status" value="1"/>
</dbReference>